<sequence>MAKAKKVGARRKASGAPAGARGGPAKANSNPFEVKVNRQKFQILGRKTRHDVGLPGVSRARALRKRTQTLLKEYKERDKSNVFRDKRFGEYNSNMSPEEKMMKRFALEQQRHHEKKSIYNLNEDEELTHYGQSLADIEKHNDIVDSDSDAEDRGTLSAELTAAHFGGGGGLLHKKTQQEGEEREKPKSRKELIEELIAKSKQEKRERQAQREDALELTEKLDQDWKEIQTLLSHKTPKSENRDKKEKPKPDAYDMMVRELGFEMKAQPSNRMKTEAELAKEEQEHLRKLEAERLRRMLGKDEDENVKKPKHMSADDLNDGFVLDKDDRRLLSYKDGKMNVEEDVQEEQSKEASDPESNEEEGDSSGGEDTEESDSPDSHLDLESNVESEEENEKPAKEQRQTPGKGLISGKERAGKATRDELPYTFAAPESYEELRSLLLGRSMEEQLLVVERIQKCNHPSLAEGNKAKLEKLFGFLLEYVGDLATDDPPDLTVIDKLVVHLYHLCQMFPESASDAIKFVLRDAMHEMEEMIETKGRAALPGLDVLIYLKITGLLFPTSDFWHPVVTPALVCLSQLLTKCPILSLQDVVKGLFVCCLFLEYVALSQRFIPELINFLLGILYIATPNKASQGSTLVHPFRALGKNSELLVVSAREDVATWQQSSLSLRWASRLRAPTSTEANHIRLSCLAVGLALLKRCVLMYGSLPSFHAIMGPLQALLTDHLADCSHPQELQELCQSTLTEMESQKQLCRPLTCEKSKPVPLKLFTPRLVKVLEFGRKQGSSKEEQERKRLIHKHKREFKGAVREIRKDNQFLARMQLSEIMERDAERKRKVKQLFNSLATQEGEWKALKRKKFKK</sequence>
<organism>
    <name type="scientific">Homo sapiens</name>
    <name type="common">Human</name>
    <dbReference type="NCBI Taxonomy" id="9606"/>
    <lineage>
        <taxon>Eukaryota</taxon>
        <taxon>Metazoa</taxon>
        <taxon>Chordata</taxon>
        <taxon>Craniata</taxon>
        <taxon>Vertebrata</taxon>
        <taxon>Euteleostomi</taxon>
        <taxon>Mammalia</taxon>
        <taxon>Eutheria</taxon>
        <taxon>Euarchontoglires</taxon>
        <taxon>Primates</taxon>
        <taxon>Haplorrhini</taxon>
        <taxon>Catarrhini</taxon>
        <taxon>Hominidae</taxon>
        <taxon>Homo</taxon>
    </lineage>
</organism>
<protein>
    <recommendedName>
        <fullName>Nucleolar protein 14</fullName>
    </recommendedName>
    <alternativeName>
        <fullName>Nucleolar complex protein 14</fullName>
    </alternativeName>
</protein>
<accession>P78316</accession>
<accession>D3DVR6</accession>
<accession>Q7LGI5</accession>
<accession>Q7Z6K0</accession>
<accession>Q8TBR6</accession>
<gene>
    <name type="primary">NOP14</name>
    <name type="synonym">C4orf9</name>
    <name type="synonym">NOL14</name>
    <name type="ORF">RES4-25</name>
</gene>
<evidence type="ECO:0000250" key="1"/>
<evidence type="ECO:0000256" key="2">
    <source>
        <dbReference type="SAM" id="MobiDB-lite"/>
    </source>
</evidence>
<evidence type="ECO:0000269" key="3">
    <source ref="2"/>
</evidence>
<evidence type="ECO:0000303" key="4">
    <source>
    </source>
</evidence>
<evidence type="ECO:0000305" key="5"/>
<evidence type="ECO:0007744" key="6">
    <source>
    </source>
</evidence>
<evidence type="ECO:0007744" key="7">
    <source>
    </source>
</evidence>
<evidence type="ECO:0007744" key="8">
    <source>
    </source>
</evidence>
<evidence type="ECO:0007744" key="9">
    <source>
    </source>
</evidence>
<evidence type="ECO:0007744" key="10">
    <source>
    </source>
</evidence>
<evidence type="ECO:0007744" key="11">
    <source>
    </source>
</evidence>
<evidence type="ECO:0007744" key="12">
    <source>
    </source>
</evidence>
<evidence type="ECO:0007744" key="13">
    <source>
    </source>
</evidence>
<proteinExistence type="evidence at protein level"/>
<keyword id="KW-0025">Alternative splicing</keyword>
<keyword id="KW-0539">Nucleus</keyword>
<keyword id="KW-0597">Phosphoprotein</keyword>
<keyword id="KW-1267">Proteomics identification</keyword>
<keyword id="KW-1185">Reference proteome</keyword>
<keyword id="KW-0690">Ribosome biogenesis</keyword>
<keyword id="KW-0698">rRNA processing</keyword>
<feature type="chain" id="PRO_0000137155" description="Nucleolar protein 14">
    <location>
        <begin position="1"/>
        <end position="857"/>
    </location>
</feature>
<feature type="region of interest" description="Disordered" evidence="2">
    <location>
        <begin position="1"/>
        <end position="34"/>
    </location>
</feature>
<feature type="region of interest" description="Disordered" evidence="2">
    <location>
        <begin position="162"/>
        <end position="252"/>
    </location>
</feature>
<feature type="region of interest" description="Disordered" evidence="2">
    <location>
        <begin position="264"/>
        <end position="422"/>
    </location>
</feature>
<feature type="compositionally biased region" description="Basic residues" evidence="2">
    <location>
        <begin position="1"/>
        <end position="13"/>
    </location>
</feature>
<feature type="compositionally biased region" description="Low complexity" evidence="2">
    <location>
        <begin position="14"/>
        <end position="27"/>
    </location>
</feature>
<feature type="compositionally biased region" description="Basic and acidic residues" evidence="2">
    <location>
        <begin position="176"/>
        <end position="227"/>
    </location>
</feature>
<feature type="compositionally biased region" description="Basic and acidic residues" evidence="2">
    <location>
        <begin position="237"/>
        <end position="252"/>
    </location>
</feature>
<feature type="compositionally biased region" description="Basic and acidic residues" evidence="2">
    <location>
        <begin position="272"/>
        <end position="300"/>
    </location>
</feature>
<feature type="compositionally biased region" description="Basic and acidic residues" evidence="2">
    <location>
        <begin position="322"/>
        <end position="340"/>
    </location>
</feature>
<feature type="compositionally biased region" description="Acidic residues" evidence="2">
    <location>
        <begin position="354"/>
        <end position="375"/>
    </location>
</feature>
<feature type="compositionally biased region" description="Basic and acidic residues" evidence="2">
    <location>
        <begin position="410"/>
        <end position="422"/>
    </location>
</feature>
<feature type="modified residue" description="Phosphoserine" evidence="8 9 10 11 12">
    <location>
        <position position="96"/>
    </location>
</feature>
<feature type="modified residue" description="Phosphoserine" evidence="6 7 9 10 11 13">
    <location>
        <position position="146"/>
    </location>
</feature>
<feature type="modified residue" description="Phosphoserine" evidence="6 7 10 13">
    <location>
        <position position="148"/>
    </location>
</feature>
<feature type="modified residue" description="Phosphoserine" evidence="11">
    <location>
        <position position="349"/>
    </location>
</feature>
<feature type="splice variant" id="VSP_018021" description="In isoform 2." evidence="4">
    <original>KVLEFGRKQGSSKEEQERKRLIHKHKREFKGAVREIRKDNQFLARMQL</original>
    <variation>SNSRPQVIHLPWPPNYRCEPQHPAKKVIFFRVIML</variation>
    <location>
        <begin position="772"/>
        <end position="819"/>
    </location>
</feature>
<feature type="splice variant" id="VSP_018022" description="In isoform 2." evidence="4">
    <location>
        <begin position="820"/>
        <end position="857"/>
    </location>
</feature>
<feature type="sequence variant" id="VAR_053540" description="In dbSNP:rs2515960." evidence="3">
    <original>L</original>
    <variation>S</variation>
    <location>
        <position position="380"/>
    </location>
</feature>
<feature type="sequence variant" id="VAR_060075" description="In dbSNP:rs1054090.">
    <original>Q</original>
    <variation>R</variation>
    <location>
        <position position="716"/>
    </location>
</feature>
<name>NOP14_HUMAN</name>
<reference key="1">
    <citation type="journal article" date="1997" name="Somat. Cell Mol. Genet.">
        <title>Exon trapping and sequence-based methods of gene finding in transcript mapping of human 4p16.3.</title>
        <authorList>
            <person name="Pribill I."/>
            <person name="Barnes G.T."/>
            <person name="Chen J."/>
            <person name="Church D."/>
            <person name="Buckler A."/>
            <person name="Baxendale S."/>
            <person name="Bates G.P."/>
            <person name="Lehrach H."/>
            <person name="Gusella M.J."/>
            <person name="Duyao M.P."/>
            <person name="Ambrose C.M."/>
            <person name="Gusella J.F."/>
            <person name="MacDonald M.E."/>
        </authorList>
    </citation>
    <scope>NUCLEOTIDE SEQUENCE [MRNA] (ISOFORM 1)</scope>
</reference>
<reference key="2">
    <citation type="submission" date="2005-09" db="EMBL/GenBank/DDBJ databases">
        <authorList>
            <person name="Mural R.J."/>
            <person name="Istrail S."/>
            <person name="Sutton G.G."/>
            <person name="Florea L."/>
            <person name="Halpern A.L."/>
            <person name="Mobarry C.M."/>
            <person name="Lippert R."/>
            <person name="Walenz B."/>
            <person name="Shatkay H."/>
            <person name="Dew I."/>
            <person name="Miller J.R."/>
            <person name="Flanigan M.J."/>
            <person name="Edwards N.J."/>
            <person name="Bolanos R."/>
            <person name="Fasulo D."/>
            <person name="Halldorsson B.V."/>
            <person name="Hannenhalli S."/>
            <person name="Turner R."/>
            <person name="Yooseph S."/>
            <person name="Lu F."/>
            <person name="Nusskern D.R."/>
            <person name="Shue B.C."/>
            <person name="Zheng X.H."/>
            <person name="Zhong F."/>
            <person name="Delcher A.L."/>
            <person name="Huson D.H."/>
            <person name="Kravitz S.A."/>
            <person name="Mouchard L."/>
            <person name="Reinert K."/>
            <person name="Remington K.A."/>
            <person name="Clark A.G."/>
            <person name="Waterman M.S."/>
            <person name="Eichler E.E."/>
            <person name="Adams M.D."/>
            <person name="Hunkapiller M.W."/>
            <person name="Myers E.W."/>
            <person name="Venter J.C."/>
        </authorList>
    </citation>
    <scope>NUCLEOTIDE SEQUENCE [LARGE SCALE GENOMIC DNA]</scope>
    <scope>VARIANT SER-380</scope>
</reference>
<reference key="3">
    <citation type="journal article" date="2004" name="Genome Res.">
        <title>The status, quality, and expansion of the NIH full-length cDNA project: the Mammalian Gene Collection (MGC).</title>
        <authorList>
            <consortium name="The MGC Project Team"/>
        </authorList>
    </citation>
    <scope>NUCLEOTIDE SEQUENCE [LARGE SCALE MRNA] (ISOFORMS 1 AND 2)</scope>
    <source>
        <tissue>Cervix</tissue>
        <tissue>Colon</tissue>
    </source>
</reference>
<reference key="4">
    <citation type="journal article" date="1998" name="DNA Res.">
        <title>The primary structure and genomic organization of five novel transcripts located close to the Huntington's disease gene on human chromosome 4p16.3.</title>
        <authorList>
            <person name="Hadano S."/>
            <person name="Ishida Y."/>
            <person name="Ikeda J.-E."/>
        </authorList>
    </citation>
    <scope>NUCLEOTIDE SEQUENCE [MRNA] OF 140-857 (ISOFORM 1)</scope>
    <source>
        <tissue>Brain</tissue>
    </source>
</reference>
<reference key="5">
    <citation type="journal article" date="2006" name="Cell">
        <title>Global, in vivo, and site-specific phosphorylation dynamics in signaling networks.</title>
        <authorList>
            <person name="Olsen J.V."/>
            <person name="Blagoev B."/>
            <person name="Gnad F."/>
            <person name="Macek B."/>
            <person name="Kumar C."/>
            <person name="Mortensen P."/>
            <person name="Mann M."/>
        </authorList>
    </citation>
    <scope>PHOSPHORYLATION [LARGE SCALE ANALYSIS] AT SER-146 AND SER-148</scope>
    <scope>IDENTIFICATION BY MASS SPECTROMETRY [LARGE SCALE ANALYSIS]</scope>
    <source>
        <tissue>Cervix carcinoma</tissue>
    </source>
</reference>
<reference key="6">
    <citation type="journal article" date="2008" name="Proc. Natl. Acad. Sci. U.S.A.">
        <title>A quantitative atlas of mitotic phosphorylation.</title>
        <authorList>
            <person name="Dephoure N."/>
            <person name="Zhou C."/>
            <person name="Villen J."/>
            <person name="Beausoleil S.A."/>
            <person name="Bakalarski C.E."/>
            <person name="Elledge S.J."/>
            <person name="Gygi S.P."/>
        </authorList>
    </citation>
    <scope>PHOSPHORYLATION [LARGE SCALE ANALYSIS] AT SER-96</scope>
    <scope>IDENTIFICATION BY MASS SPECTROMETRY [LARGE SCALE ANALYSIS]</scope>
    <source>
        <tissue>Cervix carcinoma</tissue>
    </source>
</reference>
<reference key="7">
    <citation type="journal article" date="2008" name="Proteomics">
        <title>Large-scale phosphoproteome analysis of human liver tissue by enrichment and fractionation of phosphopeptides with strong anion exchange chromatography.</title>
        <authorList>
            <person name="Han G."/>
            <person name="Ye M."/>
            <person name="Zhou H."/>
            <person name="Jiang X."/>
            <person name="Feng S."/>
            <person name="Jiang X."/>
            <person name="Tian R."/>
            <person name="Wan D."/>
            <person name="Zou H."/>
            <person name="Gu J."/>
        </authorList>
    </citation>
    <scope>PHOSPHORYLATION [LARGE SCALE ANALYSIS] AT SER-146 AND SER-148</scope>
    <scope>IDENTIFICATION BY MASS SPECTROMETRY [LARGE SCALE ANALYSIS]</scope>
    <source>
        <tissue>Liver</tissue>
    </source>
</reference>
<reference key="8">
    <citation type="journal article" date="2009" name="Anal. Chem.">
        <title>Lys-N and trypsin cover complementary parts of the phosphoproteome in a refined SCX-based approach.</title>
        <authorList>
            <person name="Gauci S."/>
            <person name="Helbig A.O."/>
            <person name="Slijper M."/>
            <person name="Krijgsveld J."/>
            <person name="Heck A.J."/>
            <person name="Mohammed S."/>
        </authorList>
    </citation>
    <scope>IDENTIFICATION BY MASS SPECTROMETRY [LARGE SCALE ANALYSIS]</scope>
</reference>
<reference key="9">
    <citation type="journal article" date="2009" name="Sci. Signal.">
        <title>Quantitative phosphoproteomic analysis of T cell receptor signaling reveals system-wide modulation of protein-protein interactions.</title>
        <authorList>
            <person name="Mayya V."/>
            <person name="Lundgren D.H."/>
            <person name="Hwang S.-I."/>
            <person name="Rezaul K."/>
            <person name="Wu L."/>
            <person name="Eng J.K."/>
            <person name="Rodionov V."/>
            <person name="Han D.K."/>
        </authorList>
    </citation>
    <scope>PHOSPHORYLATION [LARGE SCALE ANALYSIS] AT SER-96 AND SER-146</scope>
    <scope>IDENTIFICATION BY MASS SPECTROMETRY [LARGE SCALE ANALYSIS]</scope>
    <source>
        <tissue>Leukemic T-cell</tissue>
    </source>
</reference>
<reference key="10">
    <citation type="journal article" date="2010" name="Sci. Signal.">
        <title>Quantitative phosphoproteomics reveals widespread full phosphorylation site occupancy during mitosis.</title>
        <authorList>
            <person name="Olsen J.V."/>
            <person name="Vermeulen M."/>
            <person name="Santamaria A."/>
            <person name="Kumar C."/>
            <person name="Miller M.L."/>
            <person name="Jensen L.J."/>
            <person name="Gnad F."/>
            <person name="Cox J."/>
            <person name="Jensen T.S."/>
            <person name="Nigg E.A."/>
            <person name="Brunak S."/>
            <person name="Mann M."/>
        </authorList>
    </citation>
    <scope>PHOSPHORYLATION [LARGE SCALE ANALYSIS] AT SER-96; SER-146 AND SER-148</scope>
    <scope>IDENTIFICATION BY MASS SPECTROMETRY [LARGE SCALE ANALYSIS]</scope>
    <source>
        <tissue>Cervix carcinoma</tissue>
    </source>
</reference>
<reference key="11">
    <citation type="journal article" date="2011" name="BMC Syst. Biol.">
        <title>Initial characterization of the human central proteome.</title>
        <authorList>
            <person name="Burkard T.R."/>
            <person name="Planyavsky M."/>
            <person name="Kaupe I."/>
            <person name="Breitwieser F.P."/>
            <person name="Buerckstuemmer T."/>
            <person name="Bennett K.L."/>
            <person name="Superti-Furga G."/>
            <person name="Colinge J."/>
        </authorList>
    </citation>
    <scope>IDENTIFICATION BY MASS SPECTROMETRY [LARGE SCALE ANALYSIS]</scope>
</reference>
<reference key="12">
    <citation type="journal article" date="2011" name="Sci. Signal.">
        <title>System-wide temporal characterization of the proteome and phosphoproteome of human embryonic stem cell differentiation.</title>
        <authorList>
            <person name="Rigbolt K.T."/>
            <person name="Prokhorova T.A."/>
            <person name="Akimov V."/>
            <person name="Henningsen J."/>
            <person name="Johansen P.T."/>
            <person name="Kratchmarova I."/>
            <person name="Kassem M."/>
            <person name="Mann M."/>
            <person name="Olsen J.V."/>
            <person name="Blagoev B."/>
        </authorList>
    </citation>
    <scope>PHOSPHORYLATION [LARGE SCALE ANALYSIS] AT SER-96; SER-146 AND SER-349</scope>
    <scope>IDENTIFICATION BY MASS SPECTROMETRY [LARGE SCALE ANALYSIS]</scope>
</reference>
<reference key="13">
    <citation type="journal article" date="2012" name="Proc. Natl. Acad. Sci. U.S.A.">
        <title>N-terminal acetylome analyses and functional insights of the N-terminal acetyltransferase NatB.</title>
        <authorList>
            <person name="Van Damme P."/>
            <person name="Lasa M."/>
            <person name="Polevoda B."/>
            <person name="Gazquez C."/>
            <person name="Elosegui-Artola A."/>
            <person name="Kim D.S."/>
            <person name="De Juan-Pardo E."/>
            <person name="Demeyer K."/>
            <person name="Hole K."/>
            <person name="Larrea E."/>
            <person name="Timmerman E."/>
            <person name="Prieto J."/>
            <person name="Arnesen T."/>
            <person name="Sherman F."/>
            <person name="Gevaert K."/>
            <person name="Aldabe R."/>
        </authorList>
    </citation>
    <scope>IDENTIFICATION BY MASS SPECTROMETRY [LARGE SCALE ANALYSIS]</scope>
</reference>
<reference key="14">
    <citation type="journal article" date="2013" name="J. Proteome Res.">
        <title>Toward a comprehensive characterization of a human cancer cell phosphoproteome.</title>
        <authorList>
            <person name="Zhou H."/>
            <person name="Di Palma S."/>
            <person name="Preisinger C."/>
            <person name="Peng M."/>
            <person name="Polat A.N."/>
            <person name="Heck A.J."/>
            <person name="Mohammed S."/>
        </authorList>
    </citation>
    <scope>PHOSPHORYLATION [LARGE SCALE ANALYSIS] AT SER-96</scope>
    <scope>IDENTIFICATION BY MASS SPECTROMETRY [LARGE SCALE ANALYSIS]</scope>
    <source>
        <tissue>Cervix carcinoma</tissue>
        <tissue>Erythroleukemia</tissue>
    </source>
</reference>
<reference key="15">
    <citation type="journal article" date="2014" name="J. Proteomics">
        <title>An enzyme assisted RP-RPLC approach for in-depth analysis of human liver phosphoproteome.</title>
        <authorList>
            <person name="Bian Y."/>
            <person name="Song C."/>
            <person name="Cheng K."/>
            <person name="Dong M."/>
            <person name="Wang F."/>
            <person name="Huang J."/>
            <person name="Sun D."/>
            <person name="Wang L."/>
            <person name="Ye M."/>
            <person name="Zou H."/>
        </authorList>
    </citation>
    <scope>PHOSPHORYLATION [LARGE SCALE ANALYSIS] AT SER-146 AND SER-148</scope>
    <scope>IDENTIFICATION BY MASS SPECTROMETRY [LARGE SCALE ANALYSIS]</scope>
    <source>
        <tissue>Liver</tissue>
    </source>
</reference>
<comment type="function">
    <text evidence="1">Involved in nucleolar processing of pre-18S ribosomal RNA. Has a role in the nuclear export of 40S pre-ribosomal subunit to the cytoplasm (By similarity).</text>
</comment>
<comment type="subunit">
    <text evidence="1">Component of the ribosomal small subunit (SSU) processome.</text>
</comment>
<comment type="subcellular location">
    <subcellularLocation>
        <location evidence="1">Nucleus</location>
        <location evidence="1">Nucleolus</location>
    </subcellularLocation>
</comment>
<comment type="alternative products">
    <event type="alternative splicing"/>
    <isoform>
        <id>P78316-1</id>
        <name>1</name>
        <sequence type="displayed"/>
    </isoform>
    <isoform>
        <id>P78316-2</id>
        <name>2</name>
        <sequence type="described" ref="VSP_018021 VSP_018022"/>
    </isoform>
</comment>
<comment type="similarity">
    <text evidence="5">Belongs to the NOP14 family.</text>
</comment>
<comment type="sequence caution" evidence="5">
    <conflict type="erroneous initiation">
        <sequence resource="EMBL-CDS" id="AAB97011"/>
    </conflict>
</comment>
<dbReference type="EMBL" id="AF040965">
    <property type="protein sequence ID" value="AAB97011.1"/>
    <property type="status" value="ALT_INIT"/>
    <property type="molecule type" value="mRNA"/>
</dbReference>
<dbReference type="EMBL" id="CH471131">
    <property type="protein sequence ID" value="EAW82489.1"/>
    <property type="molecule type" value="Genomic_DNA"/>
</dbReference>
<dbReference type="EMBL" id="CH471131">
    <property type="protein sequence ID" value="EAW82491.1"/>
    <property type="molecule type" value="Genomic_DNA"/>
</dbReference>
<dbReference type="EMBL" id="CH471131">
    <property type="protein sequence ID" value="EAW82492.1"/>
    <property type="molecule type" value="Genomic_DNA"/>
</dbReference>
<dbReference type="EMBL" id="BC026035">
    <property type="protein sequence ID" value="AAH26035.1"/>
    <property type="molecule type" value="mRNA"/>
</dbReference>
<dbReference type="EMBL" id="BC053635">
    <property type="protein sequence ID" value="AAH53635.1"/>
    <property type="molecule type" value="mRNA"/>
</dbReference>
<dbReference type="EMBL" id="AB000467">
    <property type="protein sequence ID" value="BAA19121.1"/>
    <property type="molecule type" value="mRNA"/>
</dbReference>
<dbReference type="CCDS" id="CCDS33945.1">
    <molecule id="P78316-1"/>
</dbReference>
<dbReference type="CCDS" id="CCDS77893.1">
    <molecule id="P78316-2"/>
</dbReference>
<dbReference type="PIR" id="JE0188">
    <property type="entry name" value="JE0188"/>
</dbReference>
<dbReference type="RefSeq" id="NP_001278907.1">
    <molecule id="P78316-1"/>
    <property type="nucleotide sequence ID" value="NM_001291978.2"/>
</dbReference>
<dbReference type="RefSeq" id="NP_001278908.1">
    <molecule id="P78316-2"/>
    <property type="nucleotide sequence ID" value="NM_001291979.2"/>
</dbReference>
<dbReference type="RefSeq" id="NP_003694.1">
    <molecule id="P78316-1"/>
    <property type="nucleotide sequence ID" value="NM_003703.3"/>
</dbReference>
<dbReference type="SMR" id="P78316"/>
<dbReference type="BioGRID" id="114162">
    <property type="interactions" value="215"/>
</dbReference>
<dbReference type="ComplexPortal" id="CPX-2511">
    <property type="entry name" value="Small ribosomal subunit processome"/>
</dbReference>
<dbReference type="FunCoup" id="P78316">
    <property type="interactions" value="3183"/>
</dbReference>
<dbReference type="IntAct" id="P78316">
    <property type="interactions" value="94"/>
</dbReference>
<dbReference type="MINT" id="P78316"/>
<dbReference type="STRING" id="9606.ENSP00000405068"/>
<dbReference type="GlyGen" id="P78316">
    <property type="glycosylation" value="4 sites, 1 O-linked glycan (3 sites)"/>
</dbReference>
<dbReference type="iPTMnet" id="P78316"/>
<dbReference type="MetOSite" id="P78316"/>
<dbReference type="PhosphoSitePlus" id="P78316"/>
<dbReference type="SwissPalm" id="P78316"/>
<dbReference type="BioMuta" id="NOP14"/>
<dbReference type="DMDM" id="56404449"/>
<dbReference type="jPOST" id="P78316"/>
<dbReference type="MassIVE" id="P78316"/>
<dbReference type="PaxDb" id="9606-ENSP00000405068"/>
<dbReference type="PeptideAtlas" id="P78316"/>
<dbReference type="ProteomicsDB" id="57560">
    <molecule id="P78316-1"/>
</dbReference>
<dbReference type="ProteomicsDB" id="57561">
    <molecule id="P78316-2"/>
</dbReference>
<dbReference type="Pumba" id="P78316"/>
<dbReference type="Antibodypedia" id="22420">
    <property type="antibodies" value="69 antibodies from 19 providers"/>
</dbReference>
<dbReference type="DNASU" id="8602"/>
<dbReference type="Ensembl" id="ENST00000314262.10">
    <molecule id="P78316-1"/>
    <property type="protein sequence ID" value="ENSP00000315674.6"/>
    <property type="gene ID" value="ENSG00000087269.16"/>
</dbReference>
<dbReference type="Ensembl" id="ENST00000398071.4">
    <molecule id="P78316-2"/>
    <property type="protein sequence ID" value="ENSP00000381146.4"/>
    <property type="gene ID" value="ENSG00000087269.16"/>
</dbReference>
<dbReference type="Ensembl" id="ENST00000416614.7">
    <molecule id="P78316-1"/>
    <property type="protein sequence ID" value="ENSP00000405068.2"/>
    <property type="gene ID" value="ENSG00000087269.16"/>
</dbReference>
<dbReference type="GeneID" id="8602"/>
<dbReference type="KEGG" id="hsa:8602"/>
<dbReference type="MANE-Select" id="ENST00000416614.7">
    <property type="protein sequence ID" value="ENSP00000405068.2"/>
    <property type="RefSeq nucleotide sequence ID" value="NM_001291978.2"/>
    <property type="RefSeq protein sequence ID" value="NP_001278907.1"/>
</dbReference>
<dbReference type="UCSC" id="uc003ggj.2">
    <molecule id="P78316-1"/>
    <property type="organism name" value="human"/>
</dbReference>
<dbReference type="AGR" id="HGNC:16821"/>
<dbReference type="CTD" id="8602"/>
<dbReference type="DisGeNET" id="8602"/>
<dbReference type="GeneCards" id="NOP14"/>
<dbReference type="HGNC" id="HGNC:16821">
    <property type="gene designation" value="NOP14"/>
</dbReference>
<dbReference type="HPA" id="ENSG00000087269">
    <property type="expression patterns" value="Low tissue specificity"/>
</dbReference>
<dbReference type="MIM" id="611526">
    <property type="type" value="gene"/>
</dbReference>
<dbReference type="neXtProt" id="NX_P78316"/>
<dbReference type="OpenTargets" id="ENSG00000087269"/>
<dbReference type="PharmGKB" id="PA164723982"/>
<dbReference type="VEuPathDB" id="HostDB:ENSG00000087269"/>
<dbReference type="eggNOG" id="KOG2147">
    <property type="taxonomic scope" value="Eukaryota"/>
</dbReference>
<dbReference type="GeneTree" id="ENSGT00390000017459"/>
<dbReference type="HOGENOM" id="CLU_008874_1_1_1"/>
<dbReference type="InParanoid" id="P78316"/>
<dbReference type="OMA" id="KSCWPSL"/>
<dbReference type="OrthoDB" id="441771at2759"/>
<dbReference type="PAN-GO" id="P78316">
    <property type="GO annotations" value="4 GO annotations based on evolutionary models"/>
</dbReference>
<dbReference type="PhylomeDB" id="P78316"/>
<dbReference type="TreeFam" id="TF105698"/>
<dbReference type="PathwayCommons" id="P78316"/>
<dbReference type="Reactome" id="R-HSA-6790901">
    <property type="pathway name" value="rRNA modification in the nucleus and cytosol"/>
</dbReference>
<dbReference type="Reactome" id="R-HSA-6791226">
    <property type="pathway name" value="Major pathway of rRNA processing in the nucleolus and cytosol"/>
</dbReference>
<dbReference type="SignaLink" id="P78316"/>
<dbReference type="BioGRID-ORCS" id="8602">
    <property type="hits" value="753 hits in 1164 CRISPR screens"/>
</dbReference>
<dbReference type="CD-CODE" id="91857CE7">
    <property type="entry name" value="Nucleolus"/>
</dbReference>
<dbReference type="ChiTaRS" id="NOP14">
    <property type="organism name" value="human"/>
</dbReference>
<dbReference type="GenomeRNAi" id="8602"/>
<dbReference type="Pharos" id="P78316">
    <property type="development level" value="Tbio"/>
</dbReference>
<dbReference type="PRO" id="PR:P78316"/>
<dbReference type="Proteomes" id="UP000005640">
    <property type="component" value="Chromosome 4"/>
</dbReference>
<dbReference type="RNAct" id="P78316">
    <property type="molecule type" value="protein"/>
</dbReference>
<dbReference type="Bgee" id="ENSG00000087269">
    <property type="expression patterns" value="Expressed in sural nerve and 180 other cell types or tissues"/>
</dbReference>
<dbReference type="ExpressionAtlas" id="P78316">
    <property type="expression patterns" value="baseline and differential"/>
</dbReference>
<dbReference type="GO" id="GO:0030686">
    <property type="term" value="C:90S preribosome"/>
    <property type="evidence" value="ECO:0000250"/>
    <property type="project" value="UniProtKB"/>
</dbReference>
<dbReference type="GO" id="GO:0016020">
    <property type="term" value="C:membrane"/>
    <property type="evidence" value="ECO:0007005"/>
    <property type="project" value="UniProtKB"/>
</dbReference>
<dbReference type="GO" id="GO:0030692">
    <property type="term" value="C:Noc4p-Nop14p complex"/>
    <property type="evidence" value="ECO:0000250"/>
    <property type="project" value="UniProtKB"/>
</dbReference>
<dbReference type="GO" id="GO:0005730">
    <property type="term" value="C:nucleolus"/>
    <property type="evidence" value="ECO:0000314"/>
    <property type="project" value="HPA"/>
</dbReference>
<dbReference type="GO" id="GO:0005654">
    <property type="term" value="C:nucleoplasm"/>
    <property type="evidence" value="ECO:0000314"/>
    <property type="project" value="HPA"/>
</dbReference>
<dbReference type="GO" id="GO:0032040">
    <property type="term" value="C:small-subunit processome"/>
    <property type="evidence" value="ECO:0000250"/>
    <property type="project" value="UniProtKB"/>
</dbReference>
<dbReference type="GO" id="GO:0019899">
    <property type="term" value="F:enzyme binding"/>
    <property type="evidence" value="ECO:0000353"/>
    <property type="project" value="UniProtKB"/>
</dbReference>
<dbReference type="GO" id="GO:0003723">
    <property type="term" value="F:RNA binding"/>
    <property type="evidence" value="ECO:0007005"/>
    <property type="project" value="UniProtKB"/>
</dbReference>
<dbReference type="GO" id="GO:0030515">
    <property type="term" value="F:snoRNA binding"/>
    <property type="evidence" value="ECO:0000250"/>
    <property type="project" value="UniProtKB"/>
</dbReference>
<dbReference type="GO" id="GO:0000480">
    <property type="term" value="P:endonucleolytic cleavage in 5'-ETS of tricistronic rRNA transcript (SSU-rRNA, 5.8S rRNA, LSU-rRNA)"/>
    <property type="evidence" value="ECO:0000250"/>
    <property type="project" value="UniProtKB"/>
</dbReference>
<dbReference type="GO" id="GO:0000447">
    <property type="term" value="P:endonucleolytic cleavage in ITS1 to separate SSU-rRNA from 5.8S rRNA and LSU-rRNA from tricistronic rRNA transcript (SSU-rRNA, 5.8S rRNA, LSU-rRNA)"/>
    <property type="evidence" value="ECO:0000250"/>
    <property type="project" value="UniProtKB"/>
</dbReference>
<dbReference type="GO" id="GO:0000472">
    <property type="term" value="P:endonucleolytic cleavage to generate mature 5'-end of SSU-rRNA from (SSU-rRNA, 5.8S rRNA, LSU-rRNA)"/>
    <property type="evidence" value="ECO:0000250"/>
    <property type="project" value="UniProtKB"/>
</dbReference>
<dbReference type="GO" id="GO:0030490">
    <property type="term" value="P:maturation of SSU-rRNA"/>
    <property type="evidence" value="ECO:0000318"/>
    <property type="project" value="GO_Central"/>
</dbReference>
<dbReference type="GO" id="GO:0000462">
    <property type="term" value="P:maturation of SSU-rRNA from tricistronic rRNA transcript (SSU-rRNA, 5.8S rRNA, LSU-rRNA)"/>
    <property type="evidence" value="ECO:0000250"/>
    <property type="project" value="UniProtKB"/>
</dbReference>
<dbReference type="GO" id="GO:0042274">
    <property type="term" value="P:ribosomal small subunit biogenesis"/>
    <property type="evidence" value="ECO:0000250"/>
    <property type="project" value="UniProtKB"/>
</dbReference>
<dbReference type="GO" id="GO:0006364">
    <property type="term" value="P:rRNA processing"/>
    <property type="evidence" value="ECO:0000250"/>
    <property type="project" value="UniProtKB"/>
</dbReference>
<dbReference type="InterPro" id="IPR007276">
    <property type="entry name" value="Nop14"/>
</dbReference>
<dbReference type="PANTHER" id="PTHR23183">
    <property type="entry name" value="NOP14"/>
    <property type="match status" value="1"/>
</dbReference>
<dbReference type="PANTHER" id="PTHR23183:SF0">
    <property type="entry name" value="NUCLEOLAR PROTEIN 14"/>
    <property type="match status" value="1"/>
</dbReference>
<dbReference type="Pfam" id="PF04147">
    <property type="entry name" value="Nop14"/>
    <property type="match status" value="1"/>
</dbReference>